<protein>
    <recommendedName>
        <fullName>E3 SUMO-protein ligase MMS21</fullName>
        <ecNumber>2.3.2.-</ecNumber>
    </recommendedName>
    <alternativeName>
        <fullName evidence="5">E3 SUMO-protein transferase MMS21</fullName>
    </alternativeName>
    <alternativeName>
        <fullName>Methyl methanesulfonate-sensitivity protein 21</fullName>
    </alternativeName>
    <alternativeName>
        <fullName>Non-structural maintenance of chromosome element 2</fullName>
        <shortName>Non-SMC element 2</shortName>
    </alternativeName>
</protein>
<dbReference type="EC" id="2.3.2.-"/>
<dbReference type="EMBL" id="U12311">
    <property type="protein sequence ID" value="AAA20471.1"/>
    <property type="molecule type" value="Genomic_DNA"/>
</dbReference>
<dbReference type="EMBL" id="U18530">
    <property type="protein sequence ID" value="AAB64496.1"/>
    <property type="molecule type" value="Genomic_DNA"/>
</dbReference>
<dbReference type="EMBL" id="AY558441">
    <property type="protein sequence ID" value="AAS56767.1"/>
    <property type="molecule type" value="Genomic_DNA"/>
</dbReference>
<dbReference type="EMBL" id="BK006939">
    <property type="protein sequence ID" value="DAA07634.1"/>
    <property type="molecule type" value="Genomic_DNA"/>
</dbReference>
<dbReference type="PIR" id="S50440">
    <property type="entry name" value="S50440"/>
</dbReference>
<dbReference type="RefSeq" id="NP_010896.3">
    <property type="nucleotide sequence ID" value="NM_001178834.3"/>
</dbReference>
<dbReference type="PDB" id="3HTK">
    <property type="method" value="X-ray"/>
    <property type="resolution" value="2.31 A"/>
    <property type="chains" value="C=1-267"/>
</dbReference>
<dbReference type="PDB" id="7P47">
    <property type="method" value="X-ray"/>
    <property type="resolution" value="3.31 A"/>
    <property type="chains" value="A=27-267"/>
</dbReference>
<dbReference type="PDB" id="7QCD">
    <property type="method" value="EM"/>
    <property type="resolution" value="8.00 A"/>
    <property type="chains" value="C=2-267"/>
</dbReference>
<dbReference type="PDB" id="7YLM">
    <property type="method" value="EM"/>
    <property type="resolution" value="6.17 A"/>
    <property type="chains" value="C=1-267"/>
</dbReference>
<dbReference type="PDB" id="7YQH">
    <property type="method" value="EM"/>
    <property type="resolution" value="5.60 A"/>
    <property type="chains" value="C=1-267"/>
</dbReference>
<dbReference type="PDB" id="8I21">
    <property type="method" value="EM"/>
    <property type="resolution" value="6.02 A"/>
    <property type="chains" value="C=1-267"/>
</dbReference>
<dbReference type="PDB" id="8I4U">
    <property type="method" value="EM"/>
    <property type="resolution" value="6.73 A"/>
    <property type="chains" value="C=1-267"/>
</dbReference>
<dbReference type="PDB" id="8I4V">
    <property type="method" value="EM"/>
    <property type="resolution" value="5.97 A"/>
    <property type="chains" value="C=4-254"/>
</dbReference>
<dbReference type="PDB" id="8I4X">
    <property type="method" value="EM"/>
    <property type="resolution" value="8.50 A"/>
    <property type="chains" value="C=1-267"/>
</dbReference>
<dbReference type="PDB" id="8WJL">
    <property type="method" value="EM"/>
    <property type="resolution" value="6.15 A"/>
    <property type="chains" value="C=1-267"/>
</dbReference>
<dbReference type="PDB" id="8WJO">
    <property type="method" value="EM"/>
    <property type="resolution" value="6.04 A"/>
    <property type="chains" value="C=1-267"/>
</dbReference>
<dbReference type="PDBsum" id="3HTK"/>
<dbReference type="PDBsum" id="7P47"/>
<dbReference type="PDBsum" id="7QCD"/>
<dbReference type="PDBsum" id="7YLM"/>
<dbReference type="PDBsum" id="7YQH"/>
<dbReference type="PDBsum" id="8I21"/>
<dbReference type="PDBsum" id="8I4U"/>
<dbReference type="PDBsum" id="8I4V"/>
<dbReference type="PDBsum" id="8I4X"/>
<dbReference type="PDBsum" id="8WJL"/>
<dbReference type="PDBsum" id="8WJO"/>
<dbReference type="EMDB" id="EMD-13895"/>
<dbReference type="EMDB" id="EMD-34025"/>
<dbReference type="EMDB" id="EMD-35128"/>
<dbReference type="EMDB" id="EMD-35184"/>
<dbReference type="EMDB" id="EMD-35185"/>
<dbReference type="EMDB" id="EMD-35187"/>
<dbReference type="EMDB" id="EMD-37584"/>
<dbReference type="EMDB" id="EMD-37587"/>
<dbReference type="SMR" id="P38632"/>
<dbReference type="BioGRID" id="36711">
    <property type="interactions" value="389"/>
</dbReference>
<dbReference type="ComplexPortal" id="CPX-1364">
    <property type="entry name" value="SMC5-SMC6 SUMO ligase complex"/>
</dbReference>
<dbReference type="DIP" id="DIP-4100N"/>
<dbReference type="FunCoup" id="P38632">
    <property type="interactions" value="77"/>
</dbReference>
<dbReference type="IntAct" id="P38632">
    <property type="interactions" value="6"/>
</dbReference>
<dbReference type="MINT" id="P38632"/>
<dbReference type="STRING" id="4932.YEL019C"/>
<dbReference type="iPTMnet" id="P38632"/>
<dbReference type="PaxDb" id="4932-YEL019C"/>
<dbReference type="PeptideAtlas" id="P38632"/>
<dbReference type="EnsemblFungi" id="YEL019C_mRNA">
    <property type="protein sequence ID" value="YEL019C"/>
    <property type="gene ID" value="YEL019C"/>
</dbReference>
<dbReference type="GeneID" id="856695"/>
<dbReference type="KEGG" id="sce:YEL019C"/>
<dbReference type="AGR" id="SGD:S000000745"/>
<dbReference type="SGD" id="S000000745">
    <property type="gene designation" value="MMS21"/>
</dbReference>
<dbReference type="VEuPathDB" id="FungiDB:YEL019C"/>
<dbReference type="eggNOG" id="KOG2979">
    <property type="taxonomic scope" value="Eukaryota"/>
</dbReference>
<dbReference type="HOGENOM" id="CLU_088986_0_0_1"/>
<dbReference type="InParanoid" id="P38632"/>
<dbReference type="OMA" id="IELICPI"/>
<dbReference type="OrthoDB" id="756301at2759"/>
<dbReference type="BioCyc" id="YEAST:G3O-30144-MONOMER"/>
<dbReference type="Reactome" id="R-SCE-3108214">
    <property type="pathway name" value="SUMOylation of DNA damage response and repair proteins"/>
</dbReference>
<dbReference type="UniPathway" id="UPA00886"/>
<dbReference type="BioGRID-ORCS" id="856695">
    <property type="hits" value="0 hits in 10 CRISPR screens"/>
</dbReference>
<dbReference type="EvolutionaryTrace" id="P38632"/>
<dbReference type="PRO" id="PR:P38632"/>
<dbReference type="Proteomes" id="UP000002311">
    <property type="component" value="Chromosome V"/>
</dbReference>
<dbReference type="RNAct" id="P38632">
    <property type="molecule type" value="protein"/>
</dbReference>
<dbReference type="GO" id="GO:0000781">
    <property type="term" value="C:chromosome, telomeric region"/>
    <property type="evidence" value="ECO:0000303"/>
    <property type="project" value="ComplexPortal"/>
</dbReference>
<dbReference type="GO" id="GO:0005737">
    <property type="term" value="C:cytoplasm"/>
    <property type="evidence" value="ECO:0007005"/>
    <property type="project" value="SGD"/>
</dbReference>
<dbReference type="GO" id="GO:0005635">
    <property type="term" value="C:nuclear envelope"/>
    <property type="evidence" value="ECO:0000314"/>
    <property type="project" value="SGD"/>
</dbReference>
<dbReference type="GO" id="GO:0005634">
    <property type="term" value="C:nucleus"/>
    <property type="evidence" value="ECO:0007005"/>
    <property type="project" value="SGD"/>
</dbReference>
<dbReference type="GO" id="GO:0030915">
    <property type="term" value="C:Smc5-Smc6 complex"/>
    <property type="evidence" value="ECO:0000314"/>
    <property type="project" value="SGD"/>
</dbReference>
<dbReference type="GO" id="GO:0030291">
    <property type="term" value="F:protein serine/threonine kinase inhibitor activity"/>
    <property type="evidence" value="ECO:0000315"/>
    <property type="project" value="SGD"/>
</dbReference>
<dbReference type="GO" id="GO:0061665">
    <property type="term" value="F:SUMO ligase activity"/>
    <property type="evidence" value="ECO:0000318"/>
    <property type="project" value="GO_Central"/>
</dbReference>
<dbReference type="GO" id="GO:0019789">
    <property type="term" value="F:SUMO transferase activity"/>
    <property type="evidence" value="ECO:0000314"/>
    <property type="project" value="SGD"/>
</dbReference>
<dbReference type="GO" id="GO:0008270">
    <property type="term" value="F:zinc ion binding"/>
    <property type="evidence" value="ECO:0007669"/>
    <property type="project" value="UniProtKB-KW"/>
</dbReference>
<dbReference type="GO" id="GO:0140588">
    <property type="term" value="P:chromatin looping"/>
    <property type="evidence" value="ECO:0000303"/>
    <property type="project" value="ComplexPortal"/>
</dbReference>
<dbReference type="GO" id="GO:1990683">
    <property type="term" value="P:DNA double-strand break attachment to nuclear envelope"/>
    <property type="evidence" value="ECO:0000315"/>
    <property type="project" value="SGD"/>
</dbReference>
<dbReference type="GO" id="GO:0006281">
    <property type="term" value="P:DNA repair"/>
    <property type="evidence" value="ECO:0000315"/>
    <property type="project" value="SGD"/>
</dbReference>
<dbReference type="GO" id="GO:0000724">
    <property type="term" value="P:double-strand break repair via homologous recombination"/>
    <property type="evidence" value="ECO:0000318"/>
    <property type="project" value="GO_Central"/>
</dbReference>
<dbReference type="GO" id="GO:0016925">
    <property type="term" value="P:protein sumoylation"/>
    <property type="evidence" value="ECO:0000318"/>
    <property type="project" value="GO_Central"/>
</dbReference>
<dbReference type="GO" id="GO:0032204">
    <property type="term" value="P:regulation of telomere maintenance"/>
    <property type="evidence" value="ECO:0000303"/>
    <property type="project" value="ComplexPortal"/>
</dbReference>
<dbReference type="CDD" id="cd16651">
    <property type="entry name" value="SPL-RING_NSE2"/>
    <property type="match status" value="1"/>
</dbReference>
<dbReference type="Gene3D" id="1.20.120.1010">
    <property type="match status" value="1"/>
</dbReference>
<dbReference type="Gene3D" id="3.30.40.10">
    <property type="entry name" value="Zinc/RING finger domain, C3HC4 (zinc finger)"/>
    <property type="match status" value="1"/>
</dbReference>
<dbReference type="InterPro" id="IPR054753">
    <property type="entry name" value="MMS21_N"/>
</dbReference>
<dbReference type="InterPro" id="IPR026846">
    <property type="entry name" value="Nse2(Mms21)"/>
</dbReference>
<dbReference type="InterPro" id="IPR004181">
    <property type="entry name" value="Znf_MIZ"/>
</dbReference>
<dbReference type="InterPro" id="IPR013083">
    <property type="entry name" value="Znf_RING/FYVE/PHD"/>
</dbReference>
<dbReference type="PANTHER" id="PTHR21330">
    <property type="entry name" value="E3 SUMO-PROTEIN LIGASE NSE2"/>
    <property type="match status" value="1"/>
</dbReference>
<dbReference type="PANTHER" id="PTHR21330:SF1">
    <property type="entry name" value="E3 SUMO-PROTEIN LIGASE NSE2"/>
    <property type="match status" value="1"/>
</dbReference>
<dbReference type="Pfam" id="PF22326">
    <property type="entry name" value="MMS21_N"/>
    <property type="match status" value="1"/>
</dbReference>
<dbReference type="Pfam" id="PF11789">
    <property type="entry name" value="zf-Nse"/>
    <property type="match status" value="1"/>
</dbReference>
<dbReference type="SUPFAM" id="SSF57850">
    <property type="entry name" value="RING/U-box"/>
    <property type="match status" value="1"/>
</dbReference>
<dbReference type="PROSITE" id="PS51044">
    <property type="entry name" value="ZF_SP_RING"/>
    <property type="match status" value="1"/>
</dbReference>
<feature type="chain" id="PRO_0000218991" description="E3 SUMO-protein ligase MMS21">
    <location>
        <begin position="1"/>
        <end position="267"/>
    </location>
</feature>
<feature type="zinc finger region" description="SP-RING-type" evidence="1">
    <location>
        <begin position="169"/>
        <end position="256"/>
    </location>
</feature>
<feature type="binding site" evidence="1">
    <location>
        <position position="200"/>
    </location>
    <ligand>
        <name>Zn(2+)</name>
        <dbReference type="ChEBI" id="CHEBI:29105"/>
    </ligand>
</feature>
<feature type="binding site" evidence="1">
    <location>
        <position position="202"/>
    </location>
    <ligand>
        <name>Zn(2+)</name>
        <dbReference type="ChEBI" id="CHEBI:29105"/>
    </ligand>
</feature>
<feature type="binding site" evidence="1">
    <location>
        <position position="221"/>
    </location>
    <ligand>
        <name>Zn(2+)</name>
        <dbReference type="ChEBI" id="CHEBI:29105"/>
    </ligand>
</feature>
<feature type="binding site" evidence="1">
    <location>
        <position position="226"/>
    </location>
    <ligand>
        <name>Zn(2+)</name>
        <dbReference type="ChEBI" id="CHEBI:29105"/>
    </ligand>
</feature>
<feature type="sequence conflict" description="In Ref. 1; AAA20471." evidence="5" ref="1">
    <original>E</original>
    <variation>D</variation>
    <location>
        <position position="124"/>
    </location>
</feature>
<feature type="helix" evidence="6">
    <location>
        <begin position="16"/>
        <end position="18"/>
    </location>
</feature>
<feature type="helix" evidence="6">
    <location>
        <begin position="19"/>
        <end position="24"/>
    </location>
</feature>
<feature type="helix" evidence="6">
    <location>
        <begin position="31"/>
        <end position="51"/>
    </location>
</feature>
<feature type="helix" evidence="6">
    <location>
        <begin position="60"/>
        <end position="99"/>
    </location>
</feature>
<feature type="helix" evidence="6">
    <location>
        <begin position="108"/>
        <end position="114"/>
    </location>
</feature>
<feature type="strand" evidence="6">
    <location>
        <begin position="115"/>
        <end position="117"/>
    </location>
</feature>
<feature type="helix" evidence="6">
    <location>
        <begin position="122"/>
        <end position="127"/>
    </location>
</feature>
<feature type="helix" evidence="6">
    <location>
        <begin position="142"/>
        <end position="155"/>
    </location>
</feature>
<feature type="strand" evidence="6">
    <location>
        <begin position="177"/>
        <end position="179"/>
    </location>
</feature>
<feature type="turn" evidence="6">
    <location>
        <begin position="185"/>
        <end position="187"/>
    </location>
</feature>
<feature type="strand" evidence="6">
    <location>
        <begin position="188"/>
        <end position="190"/>
    </location>
</feature>
<feature type="strand" evidence="6">
    <location>
        <begin position="192"/>
        <end position="200"/>
    </location>
</feature>
<feature type="strand" evidence="6">
    <location>
        <begin position="203"/>
        <end position="205"/>
    </location>
</feature>
<feature type="helix" evidence="6">
    <location>
        <begin position="206"/>
        <end position="212"/>
    </location>
</feature>
<feature type="strand" evidence="7">
    <location>
        <begin position="217"/>
        <end position="220"/>
    </location>
</feature>
<feature type="helix" evidence="6">
    <location>
        <begin position="223"/>
        <end position="225"/>
    </location>
</feature>
<feature type="strand" evidence="7">
    <location>
        <begin position="229"/>
        <end position="231"/>
    </location>
</feature>
<feature type="helix" evidence="6">
    <location>
        <begin position="232"/>
        <end position="234"/>
    </location>
</feature>
<feature type="strand" evidence="6">
    <location>
        <begin position="235"/>
        <end position="237"/>
    </location>
</feature>
<feature type="helix" evidence="6">
    <location>
        <begin position="239"/>
        <end position="256"/>
    </location>
</feature>
<evidence type="ECO:0000255" key="1">
    <source>
        <dbReference type="PROSITE-ProRule" id="PRU00452"/>
    </source>
</evidence>
<evidence type="ECO:0000269" key="2">
    <source>
    </source>
</evidence>
<evidence type="ECO:0000269" key="3">
    <source>
    </source>
</evidence>
<evidence type="ECO:0000269" key="4">
    <source>
    </source>
</evidence>
<evidence type="ECO:0000305" key="5"/>
<evidence type="ECO:0007829" key="6">
    <source>
        <dbReference type="PDB" id="3HTK"/>
    </source>
</evidence>
<evidence type="ECO:0007829" key="7">
    <source>
        <dbReference type="PDB" id="7P47"/>
    </source>
</evidence>
<proteinExistence type="evidence at protein level"/>
<organism>
    <name type="scientific">Saccharomyces cerevisiae (strain ATCC 204508 / S288c)</name>
    <name type="common">Baker's yeast</name>
    <dbReference type="NCBI Taxonomy" id="559292"/>
    <lineage>
        <taxon>Eukaryota</taxon>
        <taxon>Fungi</taxon>
        <taxon>Dikarya</taxon>
        <taxon>Ascomycota</taxon>
        <taxon>Saccharomycotina</taxon>
        <taxon>Saccharomycetes</taxon>
        <taxon>Saccharomycetales</taxon>
        <taxon>Saccharomycetaceae</taxon>
        <taxon>Saccharomyces</taxon>
    </lineage>
</organism>
<gene>
    <name type="primary">MMS21</name>
    <name type="synonym">NSE2</name>
    <name type="ordered locus">YEL019C</name>
</gene>
<name>NSE2_YEAST</name>
<reference key="1">
    <citation type="submission" date="1994-07" db="EMBL/GenBank/DDBJ databases">
        <title>Cloning and sequence analysis of the MMS21 gene of yeast.</title>
        <authorList>
            <person name="Williams T.L."/>
            <person name="Montelone B.A."/>
        </authorList>
    </citation>
    <scope>NUCLEOTIDE SEQUENCE [GENOMIC DNA]</scope>
    <source>
        <strain>D7</strain>
    </source>
</reference>
<reference key="2">
    <citation type="journal article" date="1997" name="Nature">
        <title>The nucleotide sequence of Saccharomyces cerevisiae chromosome V.</title>
        <authorList>
            <person name="Dietrich F.S."/>
            <person name="Mulligan J.T."/>
            <person name="Hennessy K.M."/>
            <person name="Yelton M.A."/>
            <person name="Allen E."/>
            <person name="Araujo R."/>
            <person name="Aviles E."/>
            <person name="Berno A."/>
            <person name="Brennan T."/>
            <person name="Carpenter J."/>
            <person name="Chen E."/>
            <person name="Cherry J.M."/>
            <person name="Chung E."/>
            <person name="Duncan M."/>
            <person name="Guzman E."/>
            <person name="Hartzell G."/>
            <person name="Hunicke-Smith S."/>
            <person name="Hyman R.W."/>
            <person name="Kayser A."/>
            <person name="Komp C."/>
            <person name="Lashkari D."/>
            <person name="Lew H."/>
            <person name="Lin D."/>
            <person name="Mosedale D."/>
            <person name="Nakahara K."/>
            <person name="Namath A."/>
            <person name="Norgren R."/>
            <person name="Oefner P."/>
            <person name="Oh C."/>
            <person name="Petel F.X."/>
            <person name="Roberts D."/>
            <person name="Sehl P."/>
            <person name="Schramm S."/>
            <person name="Shogren T."/>
            <person name="Smith V."/>
            <person name="Taylor P."/>
            <person name="Wei Y."/>
            <person name="Botstein D."/>
            <person name="Davis R.W."/>
        </authorList>
    </citation>
    <scope>NUCLEOTIDE SEQUENCE [LARGE SCALE GENOMIC DNA]</scope>
    <source>
        <strain>ATCC 204508 / S288c</strain>
    </source>
</reference>
<reference key="3">
    <citation type="journal article" date="2014" name="G3 (Bethesda)">
        <title>The reference genome sequence of Saccharomyces cerevisiae: Then and now.</title>
        <authorList>
            <person name="Engel S.R."/>
            <person name="Dietrich F.S."/>
            <person name="Fisk D.G."/>
            <person name="Binkley G."/>
            <person name="Balakrishnan R."/>
            <person name="Costanzo M.C."/>
            <person name="Dwight S.S."/>
            <person name="Hitz B.C."/>
            <person name="Karra K."/>
            <person name="Nash R.S."/>
            <person name="Weng S."/>
            <person name="Wong E.D."/>
            <person name="Lloyd P."/>
            <person name="Skrzypek M.S."/>
            <person name="Miyasato S.R."/>
            <person name="Simison M."/>
            <person name="Cherry J.M."/>
        </authorList>
    </citation>
    <scope>GENOME REANNOTATION</scope>
    <source>
        <strain>ATCC 204508 / S288c</strain>
    </source>
</reference>
<reference key="4">
    <citation type="journal article" date="2007" name="Genome Res.">
        <title>Approaching a complete repository of sequence-verified protein-encoding clones for Saccharomyces cerevisiae.</title>
        <authorList>
            <person name="Hu Y."/>
            <person name="Rolfs A."/>
            <person name="Bhullar B."/>
            <person name="Murthy T.V.S."/>
            <person name="Zhu C."/>
            <person name="Berger M.F."/>
            <person name="Camargo A.A."/>
            <person name="Kelley F."/>
            <person name="McCarron S."/>
            <person name="Jepson D."/>
            <person name="Richardson A."/>
            <person name="Raphael J."/>
            <person name="Moreira D."/>
            <person name="Taycher E."/>
            <person name="Zuo D."/>
            <person name="Mohr S."/>
            <person name="Kane M.F."/>
            <person name="Williamson J."/>
            <person name="Simpson A.J.G."/>
            <person name="Bulyk M.L."/>
            <person name="Harlow E."/>
            <person name="Marsischky G."/>
            <person name="Kolodner R.D."/>
            <person name="LaBaer J."/>
        </authorList>
    </citation>
    <scope>NUCLEOTIDE SEQUENCE [GENOMIC DNA]</scope>
    <source>
        <strain>ATCC 204508 / S288c</strain>
    </source>
</reference>
<reference key="5">
    <citation type="journal article" date="2003" name="Mol. Cell">
        <title>Assigning function to yeast proteins by integration of technologies.</title>
        <authorList>
            <person name="Hazbun T.R."/>
            <person name="Malmstroem L."/>
            <person name="Anderson S."/>
            <person name="Graczyk B.J."/>
            <person name="Fox B."/>
            <person name="Riffle M."/>
            <person name="Sundin B.A."/>
            <person name="Aranda J.D."/>
            <person name="McDonald W.H."/>
            <person name="Chiu C.-H."/>
            <person name="Snydsman B.E."/>
            <person name="Bradley P."/>
            <person name="Muller E.G.D."/>
            <person name="Fields S."/>
            <person name="Baker D."/>
            <person name="Yates J.R. III"/>
            <person name="Davis T.N."/>
        </authorList>
    </citation>
    <scope>IDENTIFICATION BY MASS SPECTROMETRY</scope>
</reference>
<reference key="6">
    <citation type="journal article" date="2003" name="Nature">
        <title>Global analysis of protein localization in budding yeast.</title>
        <authorList>
            <person name="Huh W.-K."/>
            <person name="Falvo J.V."/>
            <person name="Gerke L.C."/>
            <person name="Carroll A.S."/>
            <person name="Howson R.W."/>
            <person name="Weissman J.S."/>
            <person name="O'Shea E.K."/>
        </authorList>
    </citation>
    <scope>SUBCELLULAR LOCATION [LARGE SCALE ANALYSIS]</scope>
</reference>
<reference key="7">
    <citation type="journal article" date="2003" name="Nature">
        <title>Global analysis of protein expression in yeast.</title>
        <authorList>
            <person name="Ghaemmaghami S."/>
            <person name="Huh W.-K."/>
            <person name="Bower K."/>
            <person name="Howson R.W."/>
            <person name="Belle A."/>
            <person name="Dephoure N."/>
            <person name="O'Shea E.K."/>
            <person name="Weissman J.S."/>
        </authorList>
    </citation>
    <scope>LEVEL OF PROTEIN EXPRESSION [LARGE SCALE ANALYSIS]</scope>
</reference>
<reference key="8">
    <citation type="journal article" date="2005" name="Proc. Natl. Acad. Sci. U.S.A.">
        <title>A SUMO ligase is part of a nuclear multiprotein complex that affects DNA repair and chromosomal organization.</title>
        <authorList>
            <person name="Zhao X."/>
            <person name="Blobel G."/>
        </authorList>
    </citation>
    <scope>FUNCTION</scope>
    <scope>SUBUNIT</scope>
    <scope>SUBCELLULAR LOCATION</scope>
</reference>
<sequence>MALNDNPIPKSVPLHPKSGKYFHNLHARDLSNIYQQCYKQIDETINQLVDSTSPSTIGIEEQVADITSTYKLLSTYESESNSFDEHIKDLKKNFKQSSDACPQIDLSTWDKYRTGELTAPKLSELYLNMPTPEPATMVNNTDTLKILKVLPYIWNDPTCVIPDLQNPADEDDLQIEGGKIELTCPITCKPYEAPLISRKCNHVFDRDGIQNYLQGYTTRDCPQAACSQVVSMRDFVRDPIMELRCKIAKMKESQEQDKRSSQAIDVL</sequence>
<comment type="function">
    <text evidence="4">Acts as an E3 ligase mediating SUMO/Smt3 attachment to SMC5 and YKU70. Acts in a DNA repair pathway for removal of UV-induced DNA damage that is distinct from classical nucleotide excision repair and in repair of ionizing radiation damage. Functions in homologous recombination repair of DNA double strand breaks and in recovery of stalled replication forks.</text>
</comment>
<comment type="pathway">
    <text>Protein modification; protein sumoylation.</text>
</comment>
<comment type="subunit">
    <text evidence="4">Component of the Smc5-Smc6 complex which consists of KRE29, NSE1, NSE2/MMS21, NSE3, NSE4, NSE5, SMC5 and SMC6.</text>
</comment>
<comment type="interaction">
    <interactant intactId="EBI-11017">
        <id>P38632</id>
    </interactant>
    <interactant intactId="EBI-9174">
        <id>P53067</id>
        <label>KAP114</label>
    </interactant>
    <organismsDiffer>false</organismsDiffer>
    <experiments>2</experiments>
</comment>
<comment type="interaction">
    <interactant intactId="EBI-11017">
        <id>P38632</id>
    </interactant>
    <interactant intactId="EBI-34125">
        <id>Q08204</id>
        <label>SMC5</label>
    </interactant>
    <organismsDiffer>false</organismsDiffer>
    <experiments>6</experiments>
</comment>
<comment type="subcellular location">
    <subcellularLocation>
        <location evidence="4">Nucleus</location>
    </subcellularLocation>
    <subcellularLocation>
        <location evidence="2">Cytoplasm</location>
    </subcellularLocation>
</comment>
<comment type="miscellaneous">
    <text evidence="3">Present with 2800 molecules/cell in log phase SD medium.</text>
</comment>
<comment type="similarity">
    <text evidence="5">Belongs to the NSE2 family.</text>
</comment>
<accession>P38632</accession>
<accession>D3DLN0</accession>
<keyword id="KW-0002">3D-structure</keyword>
<keyword id="KW-0963">Cytoplasm</keyword>
<keyword id="KW-0227">DNA damage</keyword>
<keyword id="KW-0233">DNA recombination</keyword>
<keyword id="KW-0234">DNA repair</keyword>
<keyword id="KW-0479">Metal-binding</keyword>
<keyword id="KW-0539">Nucleus</keyword>
<keyword id="KW-1185">Reference proteome</keyword>
<keyword id="KW-0808">Transferase</keyword>
<keyword id="KW-0833">Ubl conjugation pathway</keyword>
<keyword id="KW-0862">Zinc</keyword>
<keyword id="KW-0863">Zinc-finger</keyword>